<reference key="1">
    <citation type="journal article" date="1993" name="Curr. Genet.">
        <title>The sugar beet mitochondrial gene for the ATPase alpha-subunit: sequence, transcription and rearrangements in cytoplasmic male-sterile plants.</title>
        <authorList>
            <person name="Senda M."/>
            <person name="Mikami T."/>
            <person name="Kinoshita T."/>
        </authorList>
    </citation>
    <scope>NUCLEOTIDE SEQUENCE [GENOMIC DNA]</scope>
</reference>
<sequence>MEFSPRAAELTNLLESRITNFYTNFQVDEIGRVVSVGDGIARVYGLNEIQAGEMVEFASGVKGIALNLENENVGIVVFGSDTAIKEGDLVKRTGSIVDVPAGKAMLGRVVDALGVPIDGRGALSDHERRRVEVKAPGIIERKSVHEPMQTGLKAVDSLVPIGRGQRELIIGDRQTGKTAIAIDTILNQKQLNSKATSESETLYCVYVAVGQKRSTVAQLVQILSEANALEYSILVAATASDPAPLQFLAPYSGCAMGEYFRDNGMHALIIYDDLSKQAVAYRQMSLLLRRPPGREAFPGDVFYLHSRLLERAAKRSDQTGAGSLTALPVIETQAGDVSAYIPTNVISITDGQICLETELFYRGIRPAINVGLSVSRVGSAAQLKAMKQVCGSPKLELAQYREVAAFAQFGSDLDAATQALLNRGARLTEVPKQPQYAPLPIEKQILVIYAAVNGFCDRMPLDKISQYERTIPNSVKPELLQSLKGGLTNEKKMELDSFLKECALNY</sequence>
<organism>
    <name type="scientific">Beta vulgaris</name>
    <name type="common">Sugar beet</name>
    <dbReference type="NCBI Taxonomy" id="161934"/>
    <lineage>
        <taxon>Eukaryota</taxon>
        <taxon>Viridiplantae</taxon>
        <taxon>Streptophyta</taxon>
        <taxon>Embryophyta</taxon>
        <taxon>Tracheophyta</taxon>
        <taxon>Spermatophyta</taxon>
        <taxon>Magnoliopsida</taxon>
        <taxon>eudicotyledons</taxon>
        <taxon>Gunneridae</taxon>
        <taxon>Pentapetalae</taxon>
        <taxon>Caryophyllales</taxon>
        <taxon>Chenopodiaceae</taxon>
        <taxon>Betoideae</taxon>
        <taxon>Beta</taxon>
    </lineage>
</organism>
<feature type="chain" id="PRO_0000144396" description="ATP synthase subunit alpha, mitochondrial">
    <location>
        <begin position="1"/>
        <end position="506"/>
    </location>
</feature>
<feature type="binding site" evidence="1">
    <location>
        <begin position="171"/>
        <end position="178"/>
    </location>
    <ligand>
        <name>ATP</name>
        <dbReference type="ChEBI" id="CHEBI:30616"/>
    </ligand>
</feature>
<feature type="site" description="Required for activity" evidence="1">
    <location>
        <position position="373"/>
    </location>
</feature>
<protein>
    <recommendedName>
        <fullName>ATP synthase subunit alpha, mitochondrial</fullName>
    </recommendedName>
</protein>
<gene>
    <name type="primary">ATPA</name>
</gene>
<accession>Q06735</accession>
<geneLocation type="mitochondrion"/>
<proteinExistence type="inferred from homology"/>
<dbReference type="EMBL" id="D15065">
    <property type="protein sequence ID" value="BAA03664.1"/>
    <property type="molecule type" value="Genomic_DNA"/>
</dbReference>
<dbReference type="PIR" id="S33922">
    <property type="entry name" value="S33922"/>
</dbReference>
<dbReference type="SMR" id="Q06735"/>
<dbReference type="GO" id="GO:0005743">
    <property type="term" value="C:mitochondrial inner membrane"/>
    <property type="evidence" value="ECO:0007669"/>
    <property type="project" value="UniProtKB-SubCell"/>
</dbReference>
<dbReference type="GO" id="GO:0005739">
    <property type="term" value="C:mitochondrion"/>
    <property type="evidence" value="ECO:0000303"/>
    <property type="project" value="UniProtKB"/>
</dbReference>
<dbReference type="GO" id="GO:0045259">
    <property type="term" value="C:proton-transporting ATP synthase complex"/>
    <property type="evidence" value="ECO:0000303"/>
    <property type="project" value="UniProtKB"/>
</dbReference>
<dbReference type="GO" id="GO:0043531">
    <property type="term" value="F:ADP binding"/>
    <property type="evidence" value="ECO:0007669"/>
    <property type="project" value="TreeGrafter"/>
</dbReference>
<dbReference type="GO" id="GO:0005524">
    <property type="term" value="F:ATP binding"/>
    <property type="evidence" value="ECO:0007669"/>
    <property type="project" value="UniProtKB-KW"/>
</dbReference>
<dbReference type="GO" id="GO:0046933">
    <property type="term" value="F:proton-transporting ATP synthase activity, rotational mechanism"/>
    <property type="evidence" value="ECO:0007669"/>
    <property type="project" value="InterPro"/>
</dbReference>
<dbReference type="GO" id="GO:0006754">
    <property type="term" value="P:ATP biosynthetic process"/>
    <property type="evidence" value="ECO:0000303"/>
    <property type="project" value="UniProtKB"/>
</dbReference>
<dbReference type="CDD" id="cd18113">
    <property type="entry name" value="ATP-synt_F1_alpha_C"/>
    <property type="match status" value="1"/>
</dbReference>
<dbReference type="CDD" id="cd18116">
    <property type="entry name" value="ATP-synt_F1_alpha_N"/>
    <property type="match status" value="1"/>
</dbReference>
<dbReference type="CDD" id="cd01132">
    <property type="entry name" value="F1-ATPase_alpha_CD"/>
    <property type="match status" value="1"/>
</dbReference>
<dbReference type="FunFam" id="1.20.150.20:FF:000001">
    <property type="entry name" value="ATP synthase subunit alpha"/>
    <property type="match status" value="1"/>
</dbReference>
<dbReference type="FunFam" id="2.40.30.20:FF:000001">
    <property type="entry name" value="ATP synthase subunit alpha"/>
    <property type="match status" value="1"/>
</dbReference>
<dbReference type="FunFam" id="3.40.50.300:FF:002432">
    <property type="entry name" value="ATP synthase subunit alpha, mitochondrial"/>
    <property type="match status" value="1"/>
</dbReference>
<dbReference type="Gene3D" id="2.40.30.20">
    <property type="match status" value="1"/>
</dbReference>
<dbReference type="Gene3D" id="1.20.150.20">
    <property type="entry name" value="ATP synthase alpha/beta chain, C-terminal domain"/>
    <property type="match status" value="1"/>
</dbReference>
<dbReference type="Gene3D" id="3.40.50.300">
    <property type="entry name" value="P-loop containing nucleotide triphosphate hydrolases"/>
    <property type="match status" value="1"/>
</dbReference>
<dbReference type="HAMAP" id="MF_01346">
    <property type="entry name" value="ATP_synth_alpha_bact"/>
    <property type="match status" value="1"/>
</dbReference>
<dbReference type="InterPro" id="IPR023366">
    <property type="entry name" value="ATP_synth_asu-like_sf"/>
</dbReference>
<dbReference type="InterPro" id="IPR000793">
    <property type="entry name" value="ATP_synth_asu_C"/>
</dbReference>
<dbReference type="InterPro" id="IPR038376">
    <property type="entry name" value="ATP_synth_asu_C_sf"/>
</dbReference>
<dbReference type="InterPro" id="IPR033732">
    <property type="entry name" value="ATP_synth_F1_a_nt-bd_dom"/>
</dbReference>
<dbReference type="InterPro" id="IPR005294">
    <property type="entry name" value="ATP_synth_F1_asu"/>
</dbReference>
<dbReference type="InterPro" id="IPR020003">
    <property type="entry name" value="ATPase_a/bsu_AS"/>
</dbReference>
<dbReference type="InterPro" id="IPR004100">
    <property type="entry name" value="ATPase_F1/V1/A1_a/bsu_N"/>
</dbReference>
<dbReference type="InterPro" id="IPR036121">
    <property type="entry name" value="ATPase_F1/V1/A1_a/bsu_N_sf"/>
</dbReference>
<dbReference type="InterPro" id="IPR000194">
    <property type="entry name" value="ATPase_F1/V1/A1_a/bsu_nucl-bd"/>
</dbReference>
<dbReference type="InterPro" id="IPR027417">
    <property type="entry name" value="P-loop_NTPase"/>
</dbReference>
<dbReference type="NCBIfam" id="TIGR00962">
    <property type="entry name" value="atpA"/>
    <property type="match status" value="1"/>
</dbReference>
<dbReference type="NCBIfam" id="NF009884">
    <property type="entry name" value="PRK13343.1"/>
    <property type="match status" value="1"/>
</dbReference>
<dbReference type="PANTHER" id="PTHR48082">
    <property type="entry name" value="ATP SYNTHASE SUBUNIT ALPHA, MITOCHONDRIAL"/>
    <property type="match status" value="1"/>
</dbReference>
<dbReference type="PANTHER" id="PTHR48082:SF2">
    <property type="entry name" value="ATP SYNTHASE SUBUNIT ALPHA, MITOCHONDRIAL"/>
    <property type="match status" value="1"/>
</dbReference>
<dbReference type="Pfam" id="PF00006">
    <property type="entry name" value="ATP-synt_ab"/>
    <property type="match status" value="1"/>
</dbReference>
<dbReference type="Pfam" id="PF00306">
    <property type="entry name" value="ATP-synt_ab_C"/>
    <property type="match status" value="1"/>
</dbReference>
<dbReference type="Pfam" id="PF02874">
    <property type="entry name" value="ATP-synt_ab_N"/>
    <property type="match status" value="1"/>
</dbReference>
<dbReference type="PIRSF" id="PIRSF039088">
    <property type="entry name" value="F_ATPase_subunit_alpha"/>
    <property type="match status" value="1"/>
</dbReference>
<dbReference type="SUPFAM" id="SSF47917">
    <property type="entry name" value="C-terminal domain of alpha and beta subunits of F1 ATP synthase"/>
    <property type="match status" value="1"/>
</dbReference>
<dbReference type="SUPFAM" id="SSF50615">
    <property type="entry name" value="N-terminal domain of alpha and beta subunits of F1 ATP synthase"/>
    <property type="match status" value="1"/>
</dbReference>
<dbReference type="SUPFAM" id="SSF52540">
    <property type="entry name" value="P-loop containing nucleoside triphosphate hydrolases"/>
    <property type="match status" value="1"/>
</dbReference>
<dbReference type="PROSITE" id="PS00152">
    <property type="entry name" value="ATPASE_ALPHA_BETA"/>
    <property type="match status" value="1"/>
</dbReference>
<keyword id="KW-0066">ATP synthesis</keyword>
<keyword id="KW-0067">ATP-binding</keyword>
<keyword id="KW-0139">CF(1)</keyword>
<keyword id="KW-0375">Hydrogen ion transport</keyword>
<keyword id="KW-0406">Ion transport</keyword>
<keyword id="KW-0472">Membrane</keyword>
<keyword id="KW-0496">Mitochondrion</keyword>
<keyword id="KW-0999">Mitochondrion inner membrane</keyword>
<keyword id="KW-0547">Nucleotide-binding</keyword>
<keyword id="KW-0813">Transport</keyword>
<name>ATPAM_BETVU</name>
<comment type="function">
    <text evidence="1">Mitochondrial membrane ATP synthase (F(1)F(0) ATP synthase or Complex V) produces ATP from ADP in the presence of a proton gradient across the membrane which is generated by electron transport complexes of the respiratory chain. F-type ATPases consist of two structural domains, F(1) - containing the extramembraneous catalytic core, and F(0) - containing the membrane proton channel, linked together by a central stalk and a peripheral stalk. During catalysis, ATP synthesis in the catalytic domain of F(1) is coupled via a rotary mechanism of the central stalk subunits to proton translocation. Subunits alpha and beta form the catalytic core in F(1). Rotation of the central stalk against the surrounding alpha(3)beta(3) subunits leads to hydrolysis of ATP in three separate catalytic sites on the beta subunits. Subunit alpha does not bear the catalytic high-affinity ATP-binding sites (By similarity).</text>
</comment>
<comment type="subunit">
    <text>F-type ATPases have 2 components, CF(1) - the catalytic core - and CF(0) - the membrane proton channel. CF(1) has five subunits: alpha(3), beta(3), gamma(1), delta(1), epsilon(1). CF(0) has three main subunits: a, b and c.</text>
</comment>
<comment type="subcellular location">
    <subcellularLocation>
        <location>Mitochondrion</location>
    </subcellularLocation>
    <subcellularLocation>
        <location>Mitochondrion inner membrane</location>
    </subcellularLocation>
    <text>Peripheral membrane protein.</text>
</comment>
<comment type="similarity">
    <text evidence="2">Belongs to the ATPase alpha/beta chains family.</text>
</comment>
<evidence type="ECO:0000250" key="1"/>
<evidence type="ECO:0000305" key="2"/>